<evidence type="ECO:0000250" key="1"/>
<evidence type="ECO:0000255" key="2">
    <source>
        <dbReference type="PROSITE-ProRule" id="PRU01246"/>
    </source>
</evidence>
<evidence type="ECO:0000255" key="3">
    <source>
        <dbReference type="PROSITE-ProRule" id="PRU01248"/>
    </source>
</evidence>
<evidence type="ECO:0000305" key="4"/>
<name>XERC_MYCBO</name>
<proteinExistence type="inferred from homology"/>
<keyword id="KW-0131">Cell cycle</keyword>
<keyword id="KW-0132">Cell division</keyword>
<keyword id="KW-0159">Chromosome partition</keyword>
<keyword id="KW-0963">Cytoplasm</keyword>
<keyword id="KW-0229">DNA integration</keyword>
<keyword id="KW-0233">DNA recombination</keyword>
<keyword id="KW-0238">DNA-binding</keyword>
<keyword id="KW-1185">Reference proteome</keyword>
<gene>
    <name type="primary">xerC</name>
    <name type="ordered locus">BQ2027_MB2918C</name>
</gene>
<protein>
    <recommendedName>
        <fullName>Tyrosine recombinase XerC</fullName>
    </recommendedName>
</protein>
<accession>P67629</accession>
<accession>A0A1R3Y2H4</accession>
<accession>Q10815</accession>
<accession>X2BMB9</accession>
<organism>
    <name type="scientific">Mycobacterium bovis (strain ATCC BAA-935 / AF2122/97)</name>
    <dbReference type="NCBI Taxonomy" id="233413"/>
    <lineage>
        <taxon>Bacteria</taxon>
        <taxon>Bacillati</taxon>
        <taxon>Actinomycetota</taxon>
        <taxon>Actinomycetes</taxon>
        <taxon>Mycobacteriales</taxon>
        <taxon>Mycobacteriaceae</taxon>
        <taxon>Mycobacterium</taxon>
        <taxon>Mycobacterium tuberculosis complex</taxon>
    </lineage>
</organism>
<dbReference type="EMBL" id="LT708304">
    <property type="protein sequence ID" value="SIU01539.1"/>
    <property type="molecule type" value="Genomic_DNA"/>
</dbReference>
<dbReference type="RefSeq" id="NP_856563.1">
    <property type="nucleotide sequence ID" value="NC_002945.3"/>
</dbReference>
<dbReference type="RefSeq" id="WP_003414689.1">
    <property type="nucleotide sequence ID" value="NC_002945.4"/>
</dbReference>
<dbReference type="SMR" id="P67629"/>
<dbReference type="KEGG" id="mbo:BQ2027_MB2918C"/>
<dbReference type="PATRIC" id="fig|233413.5.peg.3204"/>
<dbReference type="Proteomes" id="UP000001419">
    <property type="component" value="Chromosome"/>
</dbReference>
<dbReference type="GO" id="GO:0005737">
    <property type="term" value="C:cytoplasm"/>
    <property type="evidence" value="ECO:0007669"/>
    <property type="project" value="UniProtKB-SubCell"/>
</dbReference>
<dbReference type="GO" id="GO:0003677">
    <property type="term" value="F:DNA binding"/>
    <property type="evidence" value="ECO:0007669"/>
    <property type="project" value="UniProtKB-KW"/>
</dbReference>
<dbReference type="GO" id="GO:0009037">
    <property type="term" value="F:tyrosine-based site-specific recombinase activity"/>
    <property type="evidence" value="ECO:0007669"/>
    <property type="project" value="UniProtKB-UniRule"/>
</dbReference>
<dbReference type="GO" id="GO:0051301">
    <property type="term" value="P:cell division"/>
    <property type="evidence" value="ECO:0007669"/>
    <property type="project" value="UniProtKB-KW"/>
</dbReference>
<dbReference type="GO" id="GO:0007059">
    <property type="term" value="P:chromosome segregation"/>
    <property type="evidence" value="ECO:0007669"/>
    <property type="project" value="UniProtKB-UniRule"/>
</dbReference>
<dbReference type="GO" id="GO:0006313">
    <property type="term" value="P:DNA transposition"/>
    <property type="evidence" value="ECO:0007669"/>
    <property type="project" value="UniProtKB-UniRule"/>
</dbReference>
<dbReference type="CDD" id="cd00798">
    <property type="entry name" value="INT_XerDC_C"/>
    <property type="match status" value="1"/>
</dbReference>
<dbReference type="FunFam" id="1.10.443.10:FF:000007">
    <property type="entry name" value="Tyrosine recombinase XerC"/>
    <property type="match status" value="1"/>
</dbReference>
<dbReference type="Gene3D" id="1.10.150.130">
    <property type="match status" value="1"/>
</dbReference>
<dbReference type="Gene3D" id="1.10.443.10">
    <property type="entry name" value="Intergrase catalytic core"/>
    <property type="match status" value="1"/>
</dbReference>
<dbReference type="HAMAP" id="MF_01808">
    <property type="entry name" value="Recomb_XerC_XerD"/>
    <property type="match status" value="1"/>
</dbReference>
<dbReference type="InterPro" id="IPR044068">
    <property type="entry name" value="CB"/>
</dbReference>
<dbReference type="InterPro" id="IPR011010">
    <property type="entry name" value="DNA_brk_join_enz"/>
</dbReference>
<dbReference type="InterPro" id="IPR013762">
    <property type="entry name" value="Integrase-like_cat_sf"/>
</dbReference>
<dbReference type="InterPro" id="IPR002104">
    <property type="entry name" value="Integrase_catalytic"/>
</dbReference>
<dbReference type="InterPro" id="IPR010998">
    <property type="entry name" value="Integrase_recombinase_N"/>
</dbReference>
<dbReference type="InterPro" id="IPR004107">
    <property type="entry name" value="Integrase_SAM-like_N"/>
</dbReference>
<dbReference type="InterPro" id="IPR023009">
    <property type="entry name" value="Tyrosine_recombinase_XerC/XerD"/>
</dbReference>
<dbReference type="InterPro" id="IPR050090">
    <property type="entry name" value="Tyrosine_recombinase_XerCD"/>
</dbReference>
<dbReference type="NCBIfam" id="NF001399">
    <property type="entry name" value="PRK00283.1"/>
    <property type="match status" value="1"/>
</dbReference>
<dbReference type="PANTHER" id="PTHR30349">
    <property type="entry name" value="PHAGE INTEGRASE-RELATED"/>
    <property type="match status" value="1"/>
</dbReference>
<dbReference type="PANTHER" id="PTHR30349:SF77">
    <property type="entry name" value="TYROSINE RECOMBINASE XERC"/>
    <property type="match status" value="1"/>
</dbReference>
<dbReference type="Pfam" id="PF02899">
    <property type="entry name" value="Phage_int_SAM_1"/>
    <property type="match status" value="1"/>
</dbReference>
<dbReference type="Pfam" id="PF00589">
    <property type="entry name" value="Phage_integrase"/>
    <property type="match status" value="1"/>
</dbReference>
<dbReference type="SUPFAM" id="SSF56349">
    <property type="entry name" value="DNA breaking-rejoining enzymes"/>
    <property type="match status" value="1"/>
</dbReference>
<dbReference type="PROSITE" id="PS51900">
    <property type="entry name" value="CB"/>
    <property type="match status" value="1"/>
</dbReference>
<dbReference type="PROSITE" id="PS51898">
    <property type="entry name" value="TYR_RECOMBINASE"/>
    <property type="match status" value="1"/>
</dbReference>
<sequence>MQAILDEFDEYLALQCGRSVHTRRAYLGDLRSLFAFLADRGSSLDALTLSVLRSWLAATAGAGAARTTLARRTSAVKAFTAWAVRRGLLAGDPAARLQVPKARRTLPAVLRQDQALRAMAAAESGAEQGDPLALRDRLIVELLYATGIRVSELCGLDVDDIDTGHRLVRVLGKGNKQRTVPFGQPAADALHAWLVDGRRALVTAESGHALLLGARGRRLDVRQARTAVHQTVAAVDGAPDMGPHGLRHSAATHLLEGGADLRVVQELLGHSSLATTQLYTHVAVARLRAVHERAHPRA</sequence>
<reference key="1">
    <citation type="journal article" date="2003" name="Proc. Natl. Acad. Sci. U.S.A.">
        <title>The complete genome sequence of Mycobacterium bovis.</title>
        <authorList>
            <person name="Garnier T."/>
            <person name="Eiglmeier K."/>
            <person name="Camus J.-C."/>
            <person name="Medina N."/>
            <person name="Mansoor H."/>
            <person name="Pryor M."/>
            <person name="Duthoy S."/>
            <person name="Grondin S."/>
            <person name="Lacroix C."/>
            <person name="Monsempe C."/>
            <person name="Simon S."/>
            <person name="Harris B."/>
            <person name="Atkin R."/>
            <person name="Doggett J."/>
            <person name="Mayes R."/>
            <person name="Keating L."/>
            <person name="Wheeler P.R."/>
            <person name="Parkhill J."/>
            <person name="Barrell B.G."/>
            <person name="Cole S.T."/>
            <person name="Gordon S.V."/>
            <person name="Hewinson R.G."/>
        </authorList>
    </citation>
    <scope>NUCLEOTIDE SEQUENCE [LARGE SCALE GENOMIC DNA]</scope>
    <source>
        <strain>ATCC BAA-935 / AF2122/97</strain>
    </source>
</reference>
<reference key="2">
    <citation type="journal article" date="2017" name="Genome Announc.">
        <title>Updated reference genome sequence and annotation of Mycobacterium bovis AF2122/97.</title>
        <authorList>
            <person name="Malone K.M."/>
            <person name="Farrell D."/>
            <person name="Stuber T.P."/>
            <person name="Schubert O.T."/>
            <person name="Aebersold R."/>
            <person name="Robbe-Austerman S."/>
            <person name="Gordon S.V."/>
        </authorList>
    </citation>
    <scope>NUCLEOTIDE SEQUENCE [LARGE SCALE GENOMIC DNA]</scope>
    <scope>GENOME REANNOTATION</scope>
    <source>
        <strain>ATCC BAA-935 / AF2122/97</strain>
    </source>
</reference>
<feature type="chain" id="PRO_0000095307" description="Tyrosine recombinase XerC">
    <location>
        <begin position="1"/>
        <end position="298"/>
    </location>
</feature>
<feature type="domain" description="Core-binding (CB)" evidence="3">
    <location>
        <begin position="1"/>
        <end position="84"/>
    </location>
</feature>
<feature type="domain" description="Tyr recombinase" evidence="2">
    <location>
        <begin position="105"/>
        <end position="292"/>
    </location>
</feature>
<feature type="active site" evidence="2">
    <location>
        <position position="149"/>
    </location>
</feature>
<feature type="active site" evidence="2">
    <location>
        <position position="173"/>
    </location>
</feature>
<feature type="active site" evidence="2">
    <location>
        <position position="244"/>
    </location>
</feature>
<feature type="active site" evidence="2">
    <location>
        <position position="247"/>
    </location>
</feature>
<feature type="active site" evidence="2">
    <location>
        <position position="270"/>
    </location>
</feature>
<feature type="active site" description="O-(3'-phospho-DNA)-tyrosine intermediate" evidence="2">
    <location>
        <position position="279"/>
    </location>
</feature>
<comment type="function">
    <text evidence="1">Site-specific tyrosine recombinase, which acts by catalyzing the cutting and rejoining of the recombining DNA molecules. The XerC-XerD complex is essential to convert dimers of the bacterial chromosome into monomers to permit their segregation at cell division. It also contributes to the segregational stability of plasmids (By similarity).</text>
</comment>
<comment type="subunit">
    <text evidence="1">Forms a cyclic heterotetrameric complex composed of two molecules of XerC and two molecules of XerD.</text>
</comment>
<comment type="subcellular location">
    <subcellularLocation>
        <location evidence="1">Cytoplasm</location>
    </subcellularLocation>
</comment>
<comment type="similarity">
    <text evidence="4">Belongs to the 'phage' integrase family. XerC subfamily.</text>
</comment>